<comment type="function">
    <text evidence="1">Produces ATP from ADP in the presence of a proton gradient across the membrane. The catalytic sites are hosted primarily by the beta subunits.</text>
</comment>
<comment type="catalytic activity">
    <reaction evidence="1">
        <text>ATP + H2O + 4 H(+)(in) = ADP + phosphate + 5 H(+)(out)</text>
        <dbReference type="Rhea" id="RHEA:57720"/>
        <dbReference type="ChEBI" id="CHEBI:15377"/>
        <dbReference type="ChEBI" id="CHEBI:15378"/>
        <dbReference type="ChEBI" id="CHEBI:30616"/>
        <dbReference type="ChEBI" id="CHEBI:43474"/>
        <dbReference type="ChEBI" id="CHEBI:456216"/>
        <dbReference type="EC" id="7.1.2.2"/>
    </reaction>
</comment>
<comment type="subunit">
    <text evidence="1">F-type ATPases have 2 components, CF(1) - the catalytic core - and CF(0) - the membrane proton channel. CF(1) has five subunits: alpha(3), beta(3), gamma(1), delta(1), epsilon(1). CF(0) has three main subunits: a(1), b(2) and c(9-12). The alpha and beta chains form an alternating ring which encloses part of the gamma chain. CF(1) is attached to CF(0) by a central stalk formed by the gamma and epsilon chains, while a peripheral stalk is formed by the delta and b chains.</text>
</comment>
<comment type="subcellular location">
    <subcellularLocation>
        <location evidence="1">Cell membrane</location>
        <topology evidence="1">Peripheral membrane protein</topology>
    </subcellularLocation>
</comment>
<comment type="similarity">
    <text evidence="1">Belongs to the ATPase alpha/beta chains family.</text>
</comment>
<evidence type="ECO:0000255" key="1">
    <source>
        <dbReference type="HAMAP-Rule" id="MF_01347"/>
    </source>
</evidence>
<sequence>MEGKVIGIHGPVLDLQFTDYTPFERELIKVRDILVECRALLGEGKVRTVALGPTEGIRRGDKATALGKPMTIKVGEQLIGRVLSGIGAPLDQKEEPEGEERSVFNVPPQVTAVLPVSTVLETGIKALDLLAPFPRGGKIGLFGGAGVGKTVLVMELIHNVAIKHRGYSVFAGVGERTREGQELWEEMRESGVMDHLVMIFGQMNEPPGVRAITPYAAATVAEYLRSQYGGEILLFMDNIFRYAQAGMEVSTLLGRMPSAMGYQPTLFSEVAQIEERINSLAEGAITSVQAVYVPADDITDPAPATIFGHLDSSVVLSRALTEVGIYPAVDPLQSSSKMLDPEVVGYNHVQVAGRVKEFLQRYEELKDIIALLGMEELSPEDREVVLRARKIQMFLSQPFFVAEAFSGAPGKYVPLERTVEGFKAIIDGKLDHVPESALYMIGDISEAGVDV</sequence>
<reference key="1">
    <citation type="submission" date="2008-08" db="EMBL/GenBank/DDBJ databases">
        <title>The complete genome sequence of Coprothermobacter proteolyticus strain ATCC 5245 / DSM 5265 / BT.</title>
        <authorList>
            <person name="Dodson R.J."/>
            <person name="Durkin A.S."/>
            <person name="Wu M."/>
            <person name="Eisen J."/>
            <person name="Sutton G."/>
        </authorList>
    </citation>
    <scope>NUCLEOTIDE SEQUENCE [LARGE SCALE GENOMIC DNA]</scope>
    <source>
        <strain>ATCC 35245 / DSM 5265 / OCM 4 / BT</strain>
    </source>
</reference>
<keyword id="KW-0066">ATP synthesis</keyword>
<keyword id="KW-0067">ATP-binding</keyword>
<keyword id="KW-1003">Cell membrane</keyword>
<keyword id="KW-0139">CF(1)</keyword>
<keyword id="KW-0375">Hydrogen ion transport</keyword>
<keyword id="KW-0406">Ion transport</keyword>
<keyword id="KW-0472">Membrane</keyword>
<keyword id="KW-0547">Nucleotide-binding</keyword>
<keyword id="KW-1185">Reference proteome</keyword>
<keyword id="KW-1278">Translocase</keyword>
<keyword id="KW-0813">Transport</keyword>
<name>ATPB_COPPD</name>
<proteinExistence type="inferred from homology"/>
<dbReference type="EC" id="7.1.2.2" evidence="1"/>
<dbReference type="EMBL" id="CP001145">
    <property type="protein sequence ID" value="ACI17110.1"/>
    <property type="molecule type" value="Genomic_DNA"/>
</dbReference>
<dbReference type="RefSeq" id="WP_012543762.1">
    <property type="nucleotide sequence ID" value="NC_011295.1"/>
</dbReference>
<dbReference type="SMR" id="B5Y831"/>
<dbReference type="STRING" id="309798.COPRO5265_0573"/>
<dbReference type="KEGG" id="cpo:COPRO5265_0573"/>
<dbReference type="eggNOG" id="COG0055">
    <property type="taxonomic scope" value="Bacteria"/>
</dbReference>
<dbReference type="HOGENOM" id="CLU_022398_0_2_9"/>
<dbReference type="OrthoDB" id="9148544at2"/>
<dbReference type="Proteomes" id="UP000001732">
    <property type="component" value="Chromosome"/>
</dbReference>
<dbReference type="GO" id="GO:0005886">
    <property type="term" value="C:plasma membrane"/>
    <property type="evidence" value="ECO:0007669"/>
    <property type="project" value="UniProtKB-SubCell"/>
</dbReference>
<dbReference type="GO" id="GO:0045259">
    <property type="term" value="C:proton-transporting ATP synthase complex"/>
    <property type="evidence" value="ECO:0007669"/>
    <property type="project" value="UniProtKB-KW"/>
</dbReference>
<dbReference type="GO" id="GO:0005524">
    <property type="term" value="F:ATP binding"/>
    <property type="evidence" value="ECO:0007669"/>
    <property type="project" value="UniProtKB-UniRule"/>
</dbReference>
<dbReference type="GO" id="GO:0016887">
    <property type="term" value="F:ATP hydrolysis activity"/>
    <property type="evidence" value="ECO:0007669"/>
    <property type="project" value="InterPro"/>
</dbReference>
<dbReference type="GO" id="GO:0046933">
    <property type="term" value="F:proton-transporting ATP synthase activity, rotational mechanism"/>
    <property type="evidence" value="ECO:0007669"/>
    <property type="project" value="UniProtKB-UniRule"/>
</dbReference>
<dbReference type="CDD" id="cd18110">
    <property type="entry name" value="ATP-synt_F1_beta_C"/>
    <property type="match status" value="1"/>
</dbReference>
<dbReference type="CDD" id="cd01133">
    <property type="entry name" value="F1-ATPase_beta_CD"/>
    <property type="match status" value="1"/>
</dbReference>
<dbReference type="FunFam" id="1.10.1140.10:FF:000005">
    <property type="entry name" value="ATP synthase subunit beta"/>
    <property type="match status" value="1"/>
</dbReference>
<dbReference type="Gene3D" id="2.40.10.170">
    <property type="match status" value="1"/>
</dbReference>
<dbReference type="Gene3D" id="1.10.1140.10">
    <property type="entry name" value="Bovine Mitochondrial F1-atpase, Atp Synthase Beta Chain, Chain D, domain 3"/>
    <property type="match status" value="1"/>
</dbReference>
<dbReference type="Gene3D" id="3.40.50.300">
    <property type="entry name" value="P-loop containing nucleotide triphosphate hydrolases"/>
    <property type="match status" value="1"/>
</dbReference>
<dbReference type="HAMAP" id="MF_01347">
    <property type="entry name" value="ATP_synth_beta_bact"/>
    <property type="match status" value="1"/>
</dbReference>
<dbReference type="InterPro" id="IPR003593">
    <property type="entry name" value="AAA+_ATPase"/>
</dbReference>
<dbReference type="InterPro" id="IPR055190">
    <property type="entry name" value="ATP-synt_VA_C"/>
</dbReference>
<dbReference type="InterPro" id="IPR005722">
    <property type="entry name" value="ATP_synth_F1_bsu"/>
</dbReference>
<dbReference type="InterPro" id="IPR020003">
    <property type="entry name" value="ATPase_a/bsu_AS"/>
</dbReference>
<dbReference type="InterPro" id="IPR050053">
    <property type="entry name" value="ATPase_alpha/beta_chains"/>
</dbReference>
<dbReference type="InterPro" id="IPR004100">
    <property type="entry name" value="ATPase_F1/V1/A1_a/bsu_N"/>
</dbReference>
<dbReference type="InterPro" id="IPR036121">
    <property type="entry name" value="ATPase_F1/V1/A1_a/bsu_N_sf"/>
</dbReference>
<dbReference type="InterPro" id="IPR000194">
    <property type="entry name" value="ATPase_F1/V1/A1_a/bsu_nucl-bd"/>
</dbReference>
<dbReference type="InterPro" id="IPR024034">
    <property type="entry name" value="ATPase_F1/V1_b/a_C"/>
</dbReference>
<dbReference type="InterPro" id="IPR027417">
    <property type="entry name" value="P-loop_NTPase"/>
</dbReference>
<dbReference type="NCBIfam" id="TIGR01039">
    <property type="entry name" value="atpD"/>
    <property type="match status" value="1"/>
</dbReference>
<dbReference type="PANTHER" id="PTHR15184">
    <property type="entry name" value="ATP SYNTHASE"/>
    <property type="match status" value="1"/>
</dbReference>
<dbReference type="PANTHER" id="PTHR15184:SF71">
    <property type="entry name" value="ATP SYNTHASE SUBUNIT BETA, MITOCHONDRIAL"/>
    <property type="match status" value="1"/>
</dbReference>
<dbReference type="Pfam" id="PF00006">
    <property type="entry name" value="ATP-synt_ab"/>
    <property type="match status" value="1"/>
</dbReference>
<dbReference type="Pfam" id="PF02874">
    <property type="entry name" value="ATP-synt_ab_N"/>
    <property type="match status" value="1"/>
</dbReference>
<dbReference type="Pfam" id="PF22919">
    <property type="entry name" value="ATP-synt_VA_C"/>
    <property type="match status" value="1"/>
</dbReference>
<dbReference type="SMART" id="SM00382">
    <property type="entry name" value="AAA"/>
    <property type="match status" value="1"/>
</dbReference>
<dbReference type="SUPFAM" id="SSF47917">
    <property type="entry name" value="C-terminal domain of alpha and beta subunits of F1 ATP synthase"/>
    <property type="match status" value="1"/>
</dbReference>
<dbReference type="SUPFAM" id="SSF50615">
    <property type="entry name" value="N-terminal domain of alpha and beta subunits of F1 ATP synthase"/>
    <property type="match status" value="1"/>
</dbReference>
<dbReference type="SUPFAM" id="SSF52540">
    <property type="entry name" value="P-loop containing nucleoside triphosphate hydrolases"/>
    <property type="match status" value="1"/>
</dbReference>
<dbReference type="PROSITE" id="PS00152">
    <property type="entry name" value="ATPASE_ALPHA_BETA"/>
    <property type="match status" value="1"/>
</dbReference>
<protein>
    <recommendedName>
        <fullName evidence="1">ATP synthase subunit beta</fullName>
        <ecNumber evidence="1">7.1.2.2</ecNumber>
    </recommendedName>
    <alternativeName>
        <fullName evidence="1">ATP synthase F1 sector subunit beta</fullName>
    </alternativeName>
    <alternativeName>
        <fullName evidence="1">F-ATPase subunit beta</fullName>
    </alternativeName>
</protein>
<accession>B5Y831</accession>
<feature type="chain" id="PRO_1000143489" description="ATP synthase subunit beta">
    <location>
        <begin position="1"/>
        <end position="451"/>
    </location>
</feature>
<feature type="binding site" evidence="1">
    <location>
        <begin position="143"/>
        <end position="150"/>
    </location>
    <ligand>
        <name>ATP</name>
        <dbReference type="ChEBI" id="CHEBI:30616"/>
    </ligand>
</feature>
<organism>
    <name type="scientific">Coprothermobacter proteolyticus (strain ATCC 35245 / DSM 5265 / OCM 4 / BT)</name>
    <dbReference type="NCBI Taxonomy" id="309798"/>
    <lineage>
        <taxon>Bacteria</taxon>
        <taxon>Pseudomonadati</taxon>
        <taxon>Coprothermobacterota</taxon>
        <taxon>Coprothermobacteria</taxon>
        <taxon>Coprothermobacterales</taxon>
        <taxon>Coprothermobacteraceae</taxon>
        <taxon>Coprothermobacter</taxon>
    </lineage>
</organism>
<gene>
    <name evidence="1" type="primary">atpD</name>
    <name type="ordered locus">COPRO5265_0573</name>
</gene>